<dbReference type="EMBL" id="AP009240">
    <property type="protein sequence ID" value="BAG79128.1"/>
    <property type="molecule type" value="Genomic_DNA"/>
</dbReference>
<dbReference type="RefSeq" id="WP_000903377.1">
    <property type="nucleotide sequence ID" value="NC_011415.1"/>
</dbReference>
<dbReference type="SMR" id="B6I243"/>
<dbReference type="GeneID" id="75206286"/>
<dbReference type="KEGG" id="ecy:ECSE_3604"/>
<dbReference type="HOGENOM" id="CLU_166087_2_1_6"/>
<dbReference type="Proteomes" id="UP000008199">
    <property type="component" value="Chromosome"/>
</dbReference>
<dbReference type="GO" id="GO:1990228">
    <property type="term" value="C:sulfurtransferase complex"/>
    <property type="evidence" value="ECO:0007669"/>
    <property type="project" value="TreeGrafter"/>
</dbReference>
<dbReference type="GO" id="GO:0002143">
    <property type="term" value="P:tRNA wobble position uridine thiolation"/>
    <property type="evidence" value="ECO:0007669"/>
    <property type="project" value="InterPro"/>
</dbReference>
<dbReference type="FunFam" id="3.40.1260.10:FF:000002">
    <property type="entry name" value="Sulfurtransferase TusB"/>
    <property type="match status" value="1"/>
</dbReference>
<dbReference type="Gene3D" id="3.40.1260.10">
    <property type="entry name" value="DsrEFH-like"/>
    <property type="match status" value="1"/>
</dbReference>
<dbReference type="HAMAP" id="MF_01564">
    <property type="entry name" value="Thiourid_synth_B"/>
    <property type="match status" value="1"/>
</dbReference>
<dbReference type="InterPro" id="IPR027396">
    <property type="entry name" value="DsrEFH-like"/>
</dbReference>
<dbReference type="InterPro" id="IPR023526">
    <property type="entry name" value="Sulphur_relay_TusB"/>
</dbReference>
<dbReference type="InterPro" id="IPR007215">
    <property type="entry name" value="Sulphur_relay_TusB/DsrH"/>
</dbReference>
<dbReference type="NCBIfam" id="NF010035">
    <property type="entry name" value="PRK13510.1"/>
    <property type="match status" value="1"/>
</dbReference>
<dbReference type="NCBIfam" id="TIGR03011">
    <property type="entry name" value="sulf_tusB_dsrH"/>
    <property type="match status" value="1"/>
</dbReference>
<dbReference type="PANTHER" id="PTHR37526">
    <property type="entry name" value="PROTEIN TUSB"/>
    <property type="match status" value="1"/>
</dbReference>
<dbReference type="PANTHER" id="PTHR37526:SF1">
    <property type="entry name" value="PROTEIN TUSB"/>
    <property type="match status" value="1"/>
</dbReference>
<dbReference type="Pfam" id="PF04077">
    <property type="entry name" value="DsrH"/>
    <property type="match status" value="1"/>
</dbReference>
<dbReference type="SUPFAM" id="SSF75169">
    <property type="entry name" value="DsrEFH-like"/>
    <property type="match status" value="1"/>
</dbReference>
<name>TUSB_ECOSE</name>
<sequence length="95" mass="10692">MLHTLHRSPWLTDFAALLRLLSEGDELLLLQDGVTAAVDGNRYLESLRNAPIKVYALNEDLIARGLTGQISNDIIPIDYTDFVRLTVKHSSQMAW</sequence>
<keyword id="KW-0963">Cytoplasm</keyword>
<keyword id="KW-0819">tRNA processing</keyword>
<gene>
    <name evidence="1" type="primary">tusB</name>
    <name type="ordered locus">ECSE_3604</name>
</gene>
<feature type="chain" id="PRO_1000147181" description="Protein TusB">
    <location>
        <begin position="1"/>
        <end position="95"/>
    </location>
</feature>
<reference key="1">
    <citation type="journal article" date="2008" name="DNA Res.">
        <title>Complete genome sequence and comparative analysis of the wild-type commensal Escherichia coli strain SE11 isolated from a healthy adult.</title>
        <authorList>
            <person name="Oshima K."/>
            <person name="Toh H."/>
            <person name="Ogura Y."/>
            <person name="Sasamoto H."/>
            <person name="Morita H."/>
            <person name="Park S.-H."/>
            <person name="Ooka T."/>
            <person name="Iyoda S."/>
            <person name="Taylor T.D."/>
            <person name="Hayashi T."/>
            <person name="Itoh K."/>
            <person name="Hattori M."/>
        </authorList>
    </citation>
    <scope>NUCLEOTIDE SEQUENCE [LARGE SCALE GENOMIC DNA]</scope>
    <source>
        <strain>SE11</strain>
    </source>
</reference>
<organism>
    <name type="scientific">Escherichia coli (strain SE11)</name>
    <dbReference type="NCBI Taxonomy" id="409438"/>
    <lineage>
        <taxon>Bacteria</taxon>
        <taxon>Pseudomonadati</taxon>
        <taxon>Pseudomonadota</taxon>
        <taxon>Gammaproteobacteria</taxon>
        <taxon>Enterobacterales</taxon>
        <taxon>Enterobacteriaceae</taxon>
        <taxon>Escherichia</taxon>
    </lineage>
</organism>
<protein>
    <recommendedName>
        <fullName evidence="1">Protein TusB</fullName>
    </recommendedName>
    <alternativeName>
        <fullName evidence="1">tRNA 2-thiouridine synthesizing protein B</fullName>
    </alternativeName>
</protein>
<evidence type="ECO:0000255" key="1">
    <source>
        <dbReference type="HAMAP-Rule" id="MF_01564"/>
    </source>
</evidence>
<proteinExistence type="inferred from homology"/>
<comment type="function">
    <text evidence="1">Part of a sulfur-relay system required for 2-thiolation of 5-methylaminomethyl-2-thiouridine (mnm(5)s(2)U) at tRNA wobble positions.</text>
</comment>
<comment type="subunit">
    <text evidence="1">Heterohexamer, formed by a dimer of trimers. The hexameric TusBCD complex contains 2 copies each of TusB, TusC and TusD. The TusBCD complex interacts with TusE.</text>
</comment>
<comment type="subcellular location">
    <subcellularLocation>
        <location evidence="1">Cytoplasm</location>
    </subcellularLocation>
</comment>
<comment type="similarity">
    <text evidence="1">Belongs to the DsrH/TusB family.</text>
</comment>
<accession>B6I243</accession>